<reference key="1">
    <citation type="submission" date="2004-07" db="EMBL/GenBank/DDBJ databases">
        <authorList>
            <consortium name="NIH - Xenopus Gene Collection (XGC) project"/>
        </authorList>
    </citation>
    <scope>NUCLEOTIDE SEQUENCE [LARGE SCALE MRNA]</scope>
    <source>
        <tissue>Oocyte</tissue>
    </source>
</reference>
<organism>
    <name type="scientific">Xenopus laevis</name>
    <name type="common">African clawed frog</name>
    <dbReference type="NCBI Taxonomy" id="8355"/>
    <lineage>
        <taxon>Eukaryota</taxon>
        <taxon>Metazoa</taxon>
        <taxon>Chordata</taxon>
        <taxon>Craniata</taxon>
        <taxon>Vertebrata</taxon>
        <taxon>Euteleostomi</taxon>
        <taxon>Amphibia</taxon>
        <taxon>Batrachia</taxon>
        <taxon>Anura</taxon>
        <taxon>Pipoidea</taxon>
        <taxon>Pipidae</taxon>
        <taxon>Xenopodinae</taxon>
        <taxon>Xenopus</taxon>
        <taxon>Xenopus</taxon>
    </lineage>
</organism>
<keyword id="KW-0963">Cytoplasm</keyword>
<keyword id="KW-0472">Membrane</keyword>
<keyword id="KW-0479">Metal-binding</keyword>
<keyword id="KW-0496">Mitochondrion</keyword>
<keyword id="KW-1000">Mitochondrion outer membrane</keyword>
<keyword id="KW-1185">Reference proteome</keyword>
<keyword id="KW-0819">tRNA processing</keyword>
<keyword id="KW-0862">Zinc</keyword>
<accession>Q6DF96</accession>
<sequence>MKLSLSKVTSGARLGVISNFGRNGDKTLEVPGCLLYTKTASPPHLTHDTLQTIEGVPAVTHITLSTLAEHQEVLEEYKEGIGKFAGLPDAVFYCSTHDPVSPCPTGYNTNKAVSLWGSGGRIEMTTQKFISAQRVLRPDWFQCLSDGEVTPGGNSRKRIKKSVDRSLVFLDECLQLLSEHEELKPCVLIGAVEGGDLLDERLRSARETAKRPVGGFLLDGFHGISAGNEAKLSLVSAVTAELPEDKPRFIHGVGRPDEVLEFIQRGVDLFDSCFPYQVTERGCALIFTHCHRPDPETAVLEKSEMSDTERNGDVGAEIEEPDADQAEMTPFEICLKEKRFREDFGPLLEGCTCYCCRNHSRAYVHHLLMAKELLAGILLMIHNFQHYFSFFSSIRAALRDGEIKALAELIRKQNS</sequence>
<dbReference type="EMBL" id="BC076845">
    <property type="protein sequence ID" value="AAH76845.1"/>
    <property type="molecule type" value="mRNA"/>
</dbReference>
<dbReference type="RefSeq" id="NP_001086589.1">
    <property type="nucleotide sequence ID" value="NM_001093120.1"/>
</dbReference>
<dbReference type="SMR" id="Q6DF96"/>
<dbReference type="BioGRID" id="103284">
    <property type="interactions" value="1"/>
</dbReference>
<dbReference type="DNASU" id="446424"/>
<dbReference type="GeneID" id="446424"/>
<dbReference type="KEGG" id="xla:446424"/>
<dbReference type="AGR" id="Xenbase:XB-GENE-6256231"/>
<dbReference type="CTD" id="446424"/>
<dbReference type="Xenbase" id="XB-GENE-6256231">
    <property type="gene designation" value="qtrt2.L"/>
</dbReference>
<dbReference type="OrthoDB" id="27601at2759"/>
<dbReference type="Proteomes" id="UP000186698">
    <property type="component" value="Chromosome 2L"/>
</dbReference>
<dbReference type="Bgee" id="446424">
    <property type="expression patterns" value="Expressed in oocyte and 19 other cell types or tissues"/>
</dbReference>
<dbReference type="GO" id="GO:0005737">
    <property type="term" value="C:cytoplasm"/>
    <property type="evidence" value="ECO:0000250"/>
    <property type="project" value="UniProtKB"/>
</dbReference>
<dbReference type="GO" id="GO:0005741">
    <property type="term" value="C:mitochondrial outer membrane"/>
    <property type="evidence" value="ECO:0007669"/>
    <property type="project" value="UniProtKB-SubCell"/>
</dbReference>
<dbReference type="GO" id="GO:0005739">
    <property type="term" value="C:mitochondrion"/>
    <property type="evidence" value="ECO:0000250"/>
    <property type="project" value="UniProtKB"/>
</dbReference>
<dbReference type="GO" id="GO:0046872">
    <property type="term" value="F:metal ion binding"/>
    <property type="evidence" value="ECO:0007669"/>
    <property type="project" value="UniProtKB-KW"/>
</dbReference>
<dbReference type="GO" id="GO:0046982">
    <property type="term" value="F:protein heterodimerization activity"/>
    <property type="evidence" value="ECO:0000250"/>
    <property type="project" value="UniProtKB"/>
</dbReference>
<dbReference type="GO" id="GO:0042803">
    <property type="term" value="F:protein homodimerization activity"/>
    <property type="evidence" value="ECO:0000250"/>
    <property type="project" value="UniProtKB"/>
</dbReference>
<dbReference type="GO" id="GO:0000049">
    <property type="term" value="F:tRNA binding"/>
    <property type="evidence" value="ECO:0000250"/>
    <property type="project" value="UniProtKB"/>
</dbReference>
<dbReference type="GO" id="GO:0008479">
    <property type="term" value="F:tRNA-guanosine(34) queuine transglycosylase activity"/>
    <property type="evidence" value="ECO:0007669"/>
    <property type="project" value="UniProtKB-UniRule"/>
</dbReference>
<dbReference type="GO" id="GO:0101030">
    <property type="term" value="P:tRNA-guanine transglycosylation"/>
    <property type="evidence" value="ECO:0000318"/>
    <property type="project" value="GO_Central"/>
</dbReference>
<dbReference type="Gene3D" id="3.20.20.105">
    <property type="entry name" value="Queuine tRNA-ribosyltransferase-like"/>
    <property type="match status" value="1"/>
</dbReference>
<dbReference type="HAMAP" id="MF_03043">
    <property type="entry name" value="QTRT2"/>
    <property type="match status" value="1"/>
</dbReference>
<dbReference type="InterPro" id="IPR028592">
    <property type="entry name" value="QTRTD1"/>
</dbReference>
<dbReference type="InterPro" id="IPR050852">
    <property type="entry name" value="Queuine_tRNA-ribosyltrfase"/>
</dbReference>
<dbReference type="InterPro" id="IPR036511">
    <property type="entry name" value="TGT-like_sf"/>
</dbReference>
<dbReference type="InterPro" id="IPR002616">
    <property type="entry name" value="tRNA_ribo_trans-like"/>
</dbReference>
<dbReference type="NCBIfam" id="TIGR00449">
    <property type="entry name" value="tgt_general"/>
    <property type="match status" value="1"/>
</dbReference>
<dbReference type="PANTHER" id="PTHR46064">
    <property type="entry name" value="QUEUINE TRNA-RIBOSYLTRANSFERASE ACCESSORY SUBUNIT 2"/>
    <property type="match status" value="1"/>
</dbReference>
<dbReference type="PANTHER" id="PTHR46064:SF1">
    <property type="entry name" value="QUEUINE TRNA-RIBOSYLTRANSFERASE ACCESSORY SUBUNIT 2"/>
    <property type="match status" value="1"/>
</dbReference>
<dbReference type="Pfam" id="PF01702">
    <property type="entry name" value="TGT"/>
    <property type="match status" value="1"/>
</dbReference>
<dbReference type="SUPFAM" id="SSF51713">
    <property type="entry name" value="tRNA-guanine transglycosylase"/>
    <property type="match status" value="1"/>
</dbReference>
<evidence type="ECO:0000255" key="1">
    <source>
        <dbReference type="HAMAP-Rule" id="MF_03043"/>
    </source>
</evidence>
<gene>
    <name evidence="1" type="primary">qtrt2</name>
    <name evidence="1" type="synonym">qtrtd1</name>
</gene>
<comment type="function">
    <text evidence="1">Non-catalytic subunit of the queuine tRNA-ribosyltransferase (TGT) that catalyzes the base-exchange of a guanine (G) residue with queuine (Q) at position 34 (anticodon wobble position) in tRNAs with GU(N) anticodons (tRNA-Asp, -Asn, -His and -Tyr), resulting in the hypermodified nucleoside queuosine (7-(((4,5-cis-dihydroxy-2-cyclopenten-1-yl)amino)methyl)-7-deazaguanosine).</text>
</comment>
<comment type="cofactor">
    <cofactor evidence="1">
        <name>Zn(2+)</name>
        <dbReference type="ChEBI" id="CHEBI:29105"/>
    </cofactor>
    <text evidence="1">Binds 1 zinc ion per subunit.</text>
</comment>
<comment type="subunit">
    <text evidence="1">Heterodimer of a catalytic subunit qtrt1 and an accessory subunit qtrt2.</text>
</comment>
<comment type="subcellular location">
    <subcellularLocation>
        <location evidence="1">Cytoplasm</location>
    </subcellularLocation>
    <subcellularLocation>
        <location evidence="1">Mitochondrion outer membrane</location>
        <topology evidence="1">Peripheral membrane protein</topology>
        <orientation evidence="1">Cytoplasmic side</orientation>
    </subcellularLocation>
    <text evidence="1">May associate with the mitochondrion outer membrane.</text>
</comment>
<comment type="similarity">
    <text evidence="1">Belongs to the queuine tRNA-ribosyltransferase family. QTRT2 subfamily.</text>
</comment>
<feature type="chain" id="PRO_0000295635" description="Queuine tRNA-ribosyltransferase accessory subunit 2">
    <location>
        <begin position="1"/>
        <end position="415"/>
    </location>
</feature>
<feature type="binding site" evidence="1">
    <location>
        <position position="351"/>
    </location>
    <ligand>
        <name>Zn(2+)</name>
        <dbReference type="ChEBI" id="CHEBI:29105"/>
    </ligand>
</feature>
<feature type="binding site" evidence="1">
    <location>
        <position position="353"/>
    </location>
    <ligand>
        <name>Zn(2+)</name>
        <dbReference type="ChEBI" id="CHEBI:29105"/>
    </ligand>
</feature>
<feature type="binding site" evidence="1">
    <location>
        <position position="356"/>
    </location>
    <ligand>
        <name>Zn(2+)</name>
        <dbReference type="ChEBI" id="CHEBI:29105"/>
    </ligand>
</feature>
<feature type="binding site" evidence="1">
    <location>
        <position position="382"/>
    </location>
    <ligand>
        <name>Zn(2+)</name>
        <dbReference type="ChEBI" id="CHEBI:29105"/>
    </ligand>
</feature>
<name>QTRT2_XENLA</name>
<protein>
    <recommendedName>
        <fullName evidence="1">Queuine tRNA-ribosyltransferase accessory subunit 2</fullName>
    </recommendedName>
    <alternativeName>
        <fullName evidence="1">Queuine tRNA-ribosyltransferase domain-containing protein 1</fullName>
    </alternativeName>
</protein>
<proteinExistence type="evidence at transcript level"/>